<proteinExistence type="predicted"/>
<evidence type="ECO:0000255" key="1">
    <source>
        <dbReference type="PROSITE-ProRule" id="PRU00515"/>
    </source>
</evidence>
<evidence type="ECO:0000269" key="2">
    <source>
    </source>
</evidence>
<evidence type="ECO:0000303" key="3">
    <source>
    </source>
</evidence>
<evidence type="ECO:0000305" key="4"/>
<evidence type="ECO:0000305" key="5">
    <source>
    </source>
</evidence>
<accession>P72541</accession>
<feature type="chain" id="PRO_0000453962" description="4-amino-4-deoxychorismate mutase">
    <location>
        <begin position="1"/>
        <end position="129"/>
    </location>
</feature>
<feature type="domain" description="Chorismate mutase" evidence="1">
    <location>
        <begin position="16"/>
        <end position="107"/>
    </location>
</feature>
<protein>
    <recommendedName>
        <fullName evidence="4">4-amino-4-deoxychorismate mutase</fullName>
        <shortName evidence="4">ADC mutase</shortName>
        <ecNumber evidence="5">5.4.99.67</ecNumber>
    </recommendedName>
</protein>
<reference key="1">
    <citation type="journal article" date="1997" name="Mol. Microbiol.">
        <title>Identification and analysis of genes from Streptomyces pristinaespiralis encoding enzymes involved in the biosynthesis of the 4-dimethylamino-L-phenylalanine precursor of pristinamycin I.</title>
        <authorList>
            <person name="Blanc V."/>
            <person name="Gil P."/>
            <person name="Bamas-Jacques N."/>
            <person name="Lorenzon S."/>
            <person name="Zagorec M."/>
            <person name="Schleuniger J."/>
            <person name="Bisch D."/>
            <person name="Blanche F."/>
            <person name="Debussche L."/>
            <person name="Crouzet J."/>
            <person name="Thibaut D."/>
        </authorList>
    </citation>
    <scope>NUCLEOTIDE SEQUENCE [GENOMIC DNA]</scope>
    <scope>FUNCTION</scope>
    <scope>PATHWAY</scope>
    <source>
        <strain>SP92</strain>
    </source>
</reference>
<gene>
    <name evidence="3" type="primary">papB</name>
</gene>
<keyword id="KW-0045">Antibiotic biosynthesis</keyword>
<keyword id="KW-0413">Isomerase</keyword>
<dbReference type="EC" id="5.4.99.67" evidence="5"/>
<dbReference type="EMBL" id="U60417">
    <property type="protein sequence ID" value="AAC44868.1"/>
    <property type="molecule type" value="Genomic_DNA"/>
</dbReference>
<dbReference type="SMR" id="P72541"/>
<dbReference type="BRENDA" id="5.4.99.67">
    <property type="organism ID" value="12737"/>
</dbReference>
<dbReference type="GO" id="GO:0016835">
    <property type="term" value="F:carbon-oxygen lyase activity"/>
    <property type="evidence" value="ECO:0007669"/>
    <property type="project" value="InterPro"/>
</dbReference>
<dbReference type="GO" id="GO:0004106">
    <property type="term" value="F:chorismate mutase activity"/>
    <property type="evidence" value="ECO:0007669"/>
    <property type="project" value="InterPro"/>
</dbReference>
<dbReference type="GO" id="GO:0017000">
    <property type="term" value="P:antibiotic biosynthetic process"/>
    <property type="evidence" value="ECO:0007669"/>
    <property type="project" value="UniProtKB-KW"/>
</dbReference>
<dbReference type="GO" id="GO:0046417">
    <property type="term" value="P:chorismate metabolic process"/>
    <property type="evidence" value="ECO:0007669"/>
    <property type="project" value="InterPro"/>
</dbReference>
<dbReference type="GO" id="GO:0009697">
    <property type="term" value="P:salicylic acid biosynthetic process"/>
    <property type="evidence" value="ECO:0007669"/>
    <property type="project" value="InterPro"/>
</dbReference>
<dbReference type="Gene3D" id="1.20.59.10">
    <property type="entry name" value="Chorismate mutase"/>
    <property type="match status" value="1"/>
</dbReference>
<dbReference type="InterPro" id="IPR036263">
    <property type="entry name" value="Chorismate_II_sf"/>
</dbReference>
<dbReference type="InterPro" id="IPR051331">
    <property type="entry name" value="Chorismate_mutase-related"/>
</dbReference>
<dbReference type="InterPro" id="IPR036979">
    <property type="entry name" value="CM_dom_sf"/>
</dbReference>
<dbReference type="InterPro" id="IPR002701">
    <property type="entry name" value="CM_II_prokaryot"/>
</dbReference>
<dbReference type="InterPro" id="IPR008241">
    <property type="entry name" value="Isochorismate_pyruvate-lyase"/>
</dbReference>
<dbReference type="NCBIfam" id="TIGR01803">
    <property type="entry name" value="CM-like"/>
    <property type="match status" value="1"/>
</dbReference>
<dbReference type="PANTHER" id="PTHR38041">
    <property type="entry name" value="CHORISMATE MUTASE"/>
    <property type="match status" value="1"/>
</dbReference>
<dbReference type="PANTHER" id="PTHR38041:SF1">
    <property type="entry name" value="CHORISMATE MUTASE"/>
    <property type="match status" value="1"/>
</dbReference>
<dbReference type="Pfam" id="PF01817">
    <property type="entry name" value="CM_2"/>
    <property type="match status" value="1"/>
</dbReference>
<dbReference type="SMART" id="SM00830">
    <property type="entry name" value="CM_2"/>
    <property type="match status" value="1"/>
</dbReference>
<dbReference type="SUPFAM" id="SSF48600">
    <property type="entry name" value="Chorismate mutase II"/>
    <property type="match status" value="1"/>
</dbReference>
<dbReference type="PROSITE" id="PS51168">
    <property type="entry name" value="CHORISMATE_MUT_2"/>
    <property type="match status" value="1"/>
</dbReference>
<sequence length="129" mass="13666">MTPPAIPAAPPATGPAAATDPLDALRARLDAADAALLDAVRTRLDICLRIGEYKRLHQVPMMQPHRIAQVHANAARYAADHGIDPAFLRTLYDTIITETCRLEDEWIASGGAPVPTPVHASASARGAVS</sequence>
<name>PAPB_STRPR</name>
<comment type="function">
    <text evidence="2 5">Involved in pristinamycin I biosynthesis (PubMed:9044253). Probably catalyzes the conversion of 4-amino-4-deoxychorismate to 4-amino-4-deoxyprephenate (Probable).</text>
</comment>
<comment type="catalytic activity">
    <reaction evidence="5">
        <text>4-amino-4-deoxychorismate = 4-amino-4-deoxyprephenate</text>
        <dbReference type="Rhea" id="RHEA:59376"/>
        <dbReference type="ChEBI" id="CHEBI:58406"/>
        <dbReference type="ChEBI" id="CHEBI:143070"/>
        <dbReference type="EC" id="5.4.99.67"/>
    </reaction>
    <physiologicalReaction direction="left-to-right" evidence="5">
        <dbReference type="Rhea" id="RHEA:59377"/>
    </physiologicalReaction>
</comment>
<comment type="pathway">
    <text evidence="2">Antibiotic biosynthesis.</text>
</comment>
<organism>
    <name type="scientific">Streptomyces pristinaespiralis</name>
    <dbReference type="NCBI Taxonomy" id="38300"/>
    <lineage>
        <taxon>Bacteria</taxon>
        <taxon>Bacillati</taxon>
        <taxon>Actinomycetota</taxon>
        <taxon>Actinomycetes</taxon>
        <taxon>Kitasatosporales</taxon>
        <taxon>Streptomycetaceae</taxon>
        <taxon>Streptomyces</taxon>
    </lineage>
</organism>